<feature type="chain" id="PRO_0000141197" description="Putative ribose-phosphate pyrophosphokinase 2">
    <location>
        <begin position="1"/>
        <end position="324"/>
    </location>
</feature>
<feature type="binding site" evidence="1">
    <location>
        <begin position="43"/>
        <end position="45"/>
    </location>
    <ligand>
        <name>ATP</name>
        <dbReference type="ChEBI" id="CHEBI:30616"/>
    </ligand>
</feature>
<feature type="binding site" evidence="1">
    <location>
        <begin position="102"/>
        <end position="103"/>
    </location>
    <ligand>
        <name>ATP</name>
        <dbReference type="ChEBI" id="CHEBI:30616"/>
    </ligand>
</feature>
<feature type="binding site" evidence="1">
    <location>
        <position position="136"/>
    </location>
    <ligand>
        <name>Mg(2+)</name>
        <dbReference type="ChEBI" id="CHEBI:18420"/>
    </ligand>
</feature>
<feature type="binding site" evidence="1">
    <location>
        <position position="225"/>
    </location>
    <ligand>
        <name>D-ribose 5-phosphate</name>
        <dbReference type="ChEBI" id="CHEBI:78346"/>
    </ligand>
</feature>
<feature type="binding site" evidence="1">
    <location>
        <begin position="229"/>
        <end position="233"/>
    </location>
    <ligand>
        <name>D-ribose 5-phosphate</name>
        <dbReference type="ChEBI" id="CHEBI:78346"/>
    </ligand>
</feature>
<organism>
    <name type="scientific">Streptococcus agalactiae serotype III (strain NEM316)</name>
    <dbReference type="NCBI Taxonomy" id="211110"/>
    <lineage>
        <taxon>Bacteria</taxon>
        <taxon>Bacillati</taxon>
        <taxon>Bacillota</taxon>
        <taxon>Bacilli</taxon>
        <taxon>Lactobacillales</taxon>
        <taxon>Streptococcaceae</taxon>
        <taxon>Streptococcus</taxon>
    </lineage>
</organism>
<protein>
    <recommendedName>
        <fullName evidence="1">Putative ribose-phosphate pyrophosphokinase 2</fullName>
        <shortName evidence="1">RPPK 2</shortName>
        <ecNumber evidence="1">2.7.6.1</ecNumber>
    </recommendedName>
    <alternativeName>
        <fullName evidence="1">5-phospho-D-ribosyl alpha-1-diphosphate synthase 2</fullName>
    </alternativeName>
    <alternativeName>
        <fullName evidence="1">Phosphoribosyl diphosphate synthase 2</fullName>
    </alternativeName>
    <alternativeName>
        <fullName evidence="1">Phosphoribosyl pyrophosphate synthase 2</fullName>
        <shortName evidence="1">P-Rib-PP synthase 2</shortName>
        <shortName evidence="1">PRPP synthase 2</shortName>
        <shortName evidence="1">PRPPase 2</shortName>
    </alternativeName>
</protein>
<name>KPRS2_STRA3</name>
<proteinExistence type="inferred from homology"/>
<accession>Q8E568</accession>
<comment type="function">
    <text evidence="1">Involved in the biosynthesis of the central metabolite phospho-alpha-D-ribosyl-1-pyrophosphate (PRPP) via the transfer of pyrophosphoryl group from ATP to 1-hydroxyl of ribose-5-phosphate (Rib-5-P).</text>
</comment>
<comment type="catalytic activity">
    <reaction evidence="1">
        <text>D-ribose 5-phosphate + ATP = 5-phospho-alpha-D-ribose 1-diphosphate + AMP + H(+)</text>
        <dbReference type="Rhea" id="RHEA:15609"/>
        <dbReference type="ChEBI" id="CHEBI:15378"/>
        <dbReference type="ChEBI" id="CHEBI:30616"/>
        <dbReference type="ChEBI" id="CHEBI:58017"/>
        <dbReference type="ChEBI" id="CHEBI:78346"/>
        <dbReference type="ChEBI" id="CHEBI:456215"/>
        <dbReference type="EC" id="2.7.6.1"/>
    </reaction>
</comment>
<comment type="cofactor">
    <cofactor evidence="1">
        <name>Mg(2+)</name>
        <dbReference type="ChEBI" id="CHEBI:18420"/>
    </cofactor>
    <text evidence="1">Binds 1 Mg(2+) ion per subunit.</text>
</comment>
<comment type="pathway">
    <text evidence="1">Metabolic intermediate biosynthesis; 5-phospho-alpha-D-ribose 1-diphosphate biosynthesis; 5-phospho-alpha-D-ribose 1-diphosphate from D-ribose 5-phosphate (route I): step 1/1.</text>
</comment>
<comment type="subunit">
    <text evidence="1">Homohexamer.</text>
</comment>
<comment type="subcellular location">
    <subcellularLocation>
        <location evidence="1">Cytoplasm</location>
    </subcellularLocation>
</comment>
<comment type="similarity">
    <text evidence="1">Belongs to the ribose-phosphate pyrophosphokinase family. Class I subfamily.</text>
</comment>
<comment type="caution">
    <text evidence="1">Part of a set of proteins in which some residues (ACT_SITE, NP_BIND, REGION and BINDING) are not conserved.</text>
</comment>
<sequence length="324" mass="35689">MAEQYADKQIKLFSLTANREIAEKISQASGIPLGKMSSRQFSDGEIMINIEETVRGDDIYIIQSTSFPVNDNLWELLIMIDACKRASANTVNIVVPYFGYSRQDRIAASREPITAKLVANMLVKAGVDRVLTLDLHAVQVQGFFDIPVDNLFTVPLFAEHYNQLGLSGEDVVVVSPKNSGIKRARSLAEYLDSPIAIIDYAQDDSEREEGYIIGEVEGKKAIIIDDILNTGKTFAEAAKILERGGATEIYAVASHGLFAGGAADILESAPIREIIVTDSVLSKERIPSNIKYLTASHLIADAIIRIHERKPLSPLFSYRSDKKD</sequence>
<keyword id="KW-0067">ATP-binding</keyword>
<keyword id="KW-0963">Cytoplasm</keyword>
<keyword id="KW-0418">Kinase</keyword>
<keyword id="KW-0460">Magnesium</keyword>
<keyword id="KW-0479">Metal-binding</keyword>
<keyword id="KW-0545">Nucleotide biosynthesis</keyword>
<keyword id="KW-0547">Nucleotide-binding</keyword>
<keyword id="KW-0808">Transferase</keyword>
<gene>
    <name evidence="1" type="primary">prs2</name>
    <name type="ordered locus">gbs1164</name>
</gene>
<reference key="1">
    <citation type="journal article" date="2002" name="Mol. Microbiol.">
        <title>Genome sequence of Streptococcus agalactiae, a pathogen causing invasive neonatal disease.</title>
        <authorList>
            <person name="Glaser P."/>
            <person name="Rusniok C."/>
            <person name="Buchrieser C."/>
            <person name="Chevalier F."/>
            <person name="Frangeul L."/>
            <person name="Msadek T."/>
            <person name="Zouine M."/>
            <person name="Couve E."/>
            <person name="Lalioui L."/>
            <person name="Poyart C."/>
            <person name="Trieu-Cuot P."/>
            <person name="Kunst F."/>
        </authorList>
    </citation>
    <scope>NUCLEOTIDE SEQUENCE [LARGE SCALE GENOMIC DNA]</scope>
    <source>
        <strain>NEM316</strain>
    </source>
</reference>
<dbReference type="EC" id="2.7.6.1" evidence="1"/>
<dbReference type="EMBL" id="AL766849">
    <property type="protein sequence ID" value="CAD46823.1"/>
    <property type="molecule type" value="Genomic_DNA"/>
</dbReference>
<dbReference type="RefSeq" id="WP_000840698.1">
    <property type="nucleotide sequence ID" value="NC_004368.1"/>
</dbReference>
<dbReference type="SMR" id="Q8E568"/>
<dbReference type="KEGG" id="san:gbs1164"/>
<dbReference type="eggNOG" id="COG0462">
    <property type="taxonomic scope" value="Bacteria"/>
</dbReference>
<dbReference type="HOGENOM" id="CLU_033546_2_0_9"/>
<dbReference type="UniPathway" id="UPA00087">
    <property type="reaction ID" value="UER00172"/>
</dbReference>
<dbReference type="Proteomes" id="UP000000823">
    <property type="component" value="Chromosome"/>
</dbReference>
<dbReference type="GO" id="GO:0005737">
    <property type="term" value="C:cytoplasm"/>
    <property type="evidence" value="ECO:0007669"/>
    <property type="project" value="UniProtKB-SubCell"/>
</dbReference>
<dbReference type="GO" id="GO:0002189">
    <property type="term" value="C:ribose phosphate diphosphokinase complex"/>
    <property type="evidence" value="ECO:0007669"/>
    <property type="project" value="TreeGrafter"/>
</dbReference>
<dbReference type="GO" id="GO:0005524">
    <property type="term" value="F:ATP binding"/>
    <property type="evidence" value="ECO:0007669"/>
    <property type="project" value="UniProtKB-KW"/>
</dbReference>
<dbReference type="GO" id="GO:0016301">
    <property type="term" value="F:kinase activity"/>
    <property type="evidence" value="ECO:0007669"/>
    <property type="project" value="UniProtKB-KW"/>
</dbReference>
<dbReference type="GO" id="GO:0000287">
    <property type="term" value="F:magnesium ion binding"/>
    <property type="evidence" value="ECO:0007669"/>
    <property type="project" value="UniProtKB-UniRule"/>
</dbReference>
<dbReference type="GO" id="GO:0004749">
    <property type="term" value="F:ribose phosphate diphosphokinase activity"/>
    <property type="evidence" value="ECO:0007669"/>
    <property type="project" value="UniProtKB-UniRule"/>
</dbReference>
<dbReference type="GO" id="GO:0006015">
    <property type="term" value="P:5-phosphoribose 1-diphosphate biosynthetic process"/>
    <property type="evidence" value="ECO:0007669"/>
    <property type="project" value="UniProtKB-UniRule"/>
</dbReference>
<dbReference type="GO" id="GO:0006164">
    <property type="term" value="P:purine nucleotide biosynthetic process"/>
    <property type="evidence" value="ECO:0007669"/>
    <property type="project" value="TreeGrafter"/>
</dbReference>
<dbReference type="GO" id="GO:0009156">
    <property type="term" value="P:ribonucleoside monophosphate biosynthetic process"/>
    <property type="evidence" value="ECO:0007669"/>
    <property type="project" value="InterPro"/>
</dbReference>
<dbReference type="CDD" id="cd06223">
    <property type="entry name" value="PRTases_typeI"/>
    <property type="match status" value="1"/>
</dbReference>
<dbReference type="FunFam" id="3.40.50.2020:FF:000001">
    <property type="entry name" value="Ribose-phosphate pyrophosphokinase"/>
    <property type="match status" value="1"/>
</dbReference>
<dbReference type="Gene3D" id="3.40.50.2020">
    <property type="match status" value="2"/>
</dbReference>
<dbReference type="HAMAP" id="MF_00583_B">
    <property type="entry name" value="RibP_PPkinase_B"/>
    <property type="match status" value="1"/>
</dbReference>
<dbReference type="InterPro" id="IPR000842">
    <property type="entry name" value="PRib_PP_synth_CS"/>
</dbReference>
<dbReference type="InterPro" id="IPR029099">
    <property type="entry name" value="Pribosyltran_N"/>
</dbReference>
<dbReference type="InterPro" id="IPR000836">
    <property type="entry name" value="PRibTrfase_dom"/>
</dbReference>
<dbReference type="InterPro" id="IPR029057">
    <property type="entry name" value="PRTase-like"/>
</dbReference>
<dbReference type="InterPro" id="IPR005946">
    <property type="entry name" value="Rib-P_diPkinase"/>
</dbReference>
<dbReference type="InterPro" id="IPR037515">
    <property type="entry name" value="Rib-P_diPkinase_bac"/>
</dbReference>
<dbReference type="NCBIfam" id="NF002320">
    <property type="entry name" value="PRK01259.1"/>
    <property type="match status" value="1"/>
</dbReference>
<dbReference type="NCBIfam" id="NF002686">
    <property type="entry name" value="PRK02458.1"/>
    <property type="match status" value="1"/>
</dbReference>
<dbReference type="NCBIfam" id="TIGR01251">
    <property type="entry name" value="ribP_PPkin"/>
    <property type="match status" value="1"/>
</dbReference>
<dbReference type="PANTHER" id="PTHR10210">
    <property type="entry name" value="RIBOSE-PHOSPHATE DIPHOSPHOKINASE FAMILY MEMBER"/>
    <property type="match status" value="1"/>
</dbReference>
<dbReference type="PANTHER" id="PTHR10210:SF41">
    <property type="entry name" value="RIBOSE-PHOSPHATE PYROPHOSPHOKINASE 1, CHLOROPLASTIC"/>
    <property type="match status" value="1"/>
</dbReference>
<dbReference type="Pfam" id="PF14572">
    <property type="entry name" value="Pribosyl_synth"/>
    <property type="match status" value="1"/>
</dbReference>
<dbReference type="Pfam" id="PF13793">
    <property type="entry name" value="Pribosyltran_N"/>
    <property type="match status" value="1"/>
</dbReference>
<dbReference type="SMART" id="SM01400">
    <property type="entry name" value="Pribosyltran_N"/>
    <property type="match status" value="1"/>
</dbReference>
<dbReference type="SUPFAM" id="SSF53271">
    <property type="entry name" value="PRTase-like"/>
    <property type="match status" value="2"/>
</dbReference>
<dbReference type="PROSITE" id="PS00114">
    <property type="entry name" value="PRPP_SYNTHASE"/>
    <property type="match status" value="1"/>
</dbReference>
<evidence type="ECO:0000255" key="1">
    <source>
        <dbReference type="HAMAP-Rule" id="MF_00583"/>
    </source>
</evidence>